<sequence length="737" mass="81379">MLKKILPVLITLAIVHNTPTAWAAEAPKTDSFYLPKSLDLSPLRLHNIESNPYGKDFNYAQQFKTLDLEAVKKDIKTVLTTSQDWWPADYGNYGPFFIRMAWHGAGTYRIYDGRGGADGGQQRFEPLNSWPDNANLDKARRLLWPIKKKYGAKISWGDLMVLTGNIALESMGFKTLGFAGGREDDWQSDLVYWGAGNKMLSDNRDKNGKLPKPLAATQMGLIYVNPEGPNGKPDPVAAAKDIREAFARMAMNDEETVALIAGGHTFGKAHGAASPEKCLGAAPGEAGLEQQGLGWANKCGSGNGKDTITSGLEGAWTTDPTHFTMQYLSNLYKHEWVLTKSPAGAWQWKPKNAANVVPDATDPTKFHPLMMFTTDIALKVDPEYKKITTRFLENPEEFKMAFARAWFKLTHRDMGPAARYLGDEVPKETFIWQDPLPAANYKMIDSADISELKDKILKTGLSDTKLIKTAWASASTFRGTDFRGGDNGARIRLAPQKDWPVNDPAELHSVLAALMEVQNNFNKDRSDGKKVSLSDLIVLGGNAAIEDAAKKAGYSISIPFTPGRTDASQEETDVSSFAVLEPTADGFRNYYDAKRNTLSPIASLIDRANKLELTVPEMTVLIGGLRVLDVNSGGSKAGVLTNTPGQLNNNFFVNLLDMSTKWTKSPKAEGYFDGYDRKTGKLKWTASSVDLVFGSNPELRAVAEVYASDDAKEKFVHDFTKVWEKVMNLDRFDIKNN</sequence>
<proteinExistence type="inferred from homology"/>
<dbReference type="EC" id="1.11.1.21" evidence="1"/>
<dbReference type="EMBL" id="CP000950">
    <property type="protein sequence ID" value="ACA69655.1"/>
    <property type="molecule type" value="Genomic_DNA"/>
</dbReference>
<dbReference type="RefSeq" id="WP_012304547.1">
    <property type="nucleotide sequence ID" value="NZ_CP009792.1"/>
</dbReference>
<dbReference type="SMR" id="B1JJB5"/>
<dbReference type="KEGG" id="ypy:YPK_3388"/>
<dbReference type="PATRIC" id="fig|502800.11.peg.4124"/>
<dbReference type="GO" id="GO:0005829">
    <property type="term" value="C:cytosol"/>
    <property type="evidence" value="ECO:0007669"/>
    <property type="project" value="TreeGrafter"/>
</dbReference>
<dbReference type="GO" id="GO:0004096">
    <property type="term" value="F:catalase activity"/>
    <property type="evidence" value="ECO:0007669"/>
    <property type="project" value="UniProtKB-UniRule"/>
</dbReference>
<dbReference type="GO" id="GO:0020037">
    <property type="term" value="F:heme binding"/>
    <property type="evidence" value="ECO:0007669"/>
    <property type="project" value="InterPro"/>
</dbReference>
<dbReference type="GO" id="GO:0046872">
    <property type="term" value="F:metal ion binding"/>
    <property type="evidence" value="ECO:0007669"/>
    <property type="project" value="UniProtKB-KW"/>
</dbReference>
<dbReference type="GO" id="GO:0070301">
    <property type="term" value="P:cellular response to hydrogen peroxide"/>
    <property type="evidence" value="ECO:0007669"/>
    <property type="project" value="TreeGrafter"/>
</dbReference>
<dbReference type="GO" id="GO:0042744">
    <property type="term" value="P:hydrogen peroxide catabolic process"/>
    <property type="evidence" value="ECO:0007669"/>
    <property type="project" value="UniProtKB-KW"/>
</dbReference>
<dbReference type="CDD" id="cd00649">
    <property type="entry name" value="catalase_peroxidase_1"/>
    <property type="match status" value="1"/>
</dbReference>
<dbReference type="CDD" id="cd08200">
    <property type="entry name" value="catalase_peroxidase_2"/>
    <property type="match status" value="1"/>
</dbReference>
<dbReference type="FunFam" id="1.10.420.10:FF:000002">
    <property type="entry name" value="Catalase-peroxidase"/>
    <property type="match status" value="1"/>
</dbReference>
<dbReference type="FunFam" id="1.10.420.10:FF:000004">
    <property type="entry name" value="Catalase-peroxidase"/>
    <property type="match status" value="1"/>
</dbReference>
<dbReference type="FunFam" id="1.10.520.10:FF:000002">
    <property type="entry name" value="Catalase-peroxidase"/>
    <property type="match status" value="1"/>
</dbReference>
<dbReference type="Gene3D" id="1.10.520.10">
    <property type="match status" value="2"/>
</dbReference>
<dbReference type="Gene3D" id="1.10.420.10">
    <property type="entry name" value="Peroxidase, domain 2"/>
    <property type="match status" value="2"/>
</dbReference>
<dbReference type="HAMAP" id="MF_01961">
    <property type="entry name" value="Catal_peroxid"/>
    <property type="match status" value="1"/>
</dbReference>
<dbReference type="InterPro" id="IPR000763">
    <property type="entry name" value="Catalase_peroxidase"/>
</dbReference>
<dbReference type="InterPro" id="IPR002016">
    <property type="entry name" value="Haem_peroxidase"/>
</dbReference>
<dbReference type="InterPro" id="IPR010255">
    <property type="entry name" value="Haem_peroxidase_sf"/>
</dbReference>
<dbReference type="InterPro" id="IPR019794">
    <property type="entry name" value="Peroxidases_AS"/>
</dbReference>
<dbReference type="InterPro" id="IPR019793">
    <property type="entry name" value="Peroxidases_heam-ligand_BS"/>
</dbReference>
<dbReference type="NCBIfam" id="TIGR00198">
    <property type="entry name" value="cat_per_HPI"/>
    <property type="match status" value="1"/>
</dbReference>
<dbReference type="NCBIfam" id="NF011635">
    <property type="entry name" value="PRK15061.1"/>
    <property type="match status" value="1"/>
</dbReference>
<dbReference type="PANTHER" id="PTHR30555:SF0">
    <property type="entry name" value="CATALASE-PEROXIDASE"/>
    <property type="match status" value="1"/>
</dbReference>
<dbReference type="PANTHER" id="PTHR30555">
    <property type="entry name" value="HYDROPEROXIDASE I, BIFUNCTIONAL CATALASE-PEROXIDASE"/>
    <property type="match status" value="1"/>
</dbReference>
<dbReference type="Pfam" id="PF00141">
    <property type="entry name" value="peroxidase"/>
    <property type="match status" value="2"/>
</dbReference>
<dbReference type="PRINTS" id="PR00460">
    <property type="entry name" value="BPEROXIDASE"/>
</dbReference>
<dbReference type="PRINTS" id="PR00458">
    <property type="entry name" value="PEROXIDASE"/>
</dbReference>
<dbReference type="SUPFAM" id="SSF48113">
    <property type="entry name" value="Heme-dependent peroxidases"/>
    <property type="match status" value="2"/>
</dbReference>
<dbReference type="PROSITE" id="PS00435">
    <property type="entry name" value="PEROXIDASE_1"/>
    <property type="match status" value="1"/>
</dbReference>
<dbReference type="PROSITE" id="PS00436">
    <property type="entry name" value="PEROXIDASE_2"/>
    <property type="match status" value="1"/>
</dbReference>
<dbReference type="PROSITE" id="PS50873">
    <property type="entry name" value="PEROXIDASE_4"/>
    <property type="match status" value="1"/>
</dbReference>
<gene>
    <name evidence="1" type="primary">katG</name>
    <name type="ordered locus">YPK_3388</name>
</gene>
<feature type="signal peptide" evidence="1">
    <location>
        <begin position="1"/>
        <end position="23"/>
    </location>
</feature>
<feature type="chain" id="PRO_5000315758" description="Catalase-peroxidase">
    <location>
        <begin position="24"/>
        <end position="737"/>
    </location>
</feature>
<feature type="active site" description="Proton acceptor" evidence="1">
    <location>
        <position position="103"/>
    </location>
</feature>
<feature type="binding site" description="axial binding residue" evidence="1">
    <location>
        <position position="264"/>
    </location>
    <ligand>
        <name>heme b</name>
        <dbReference type="ChEBI" id="CHEBI:60344"/>
    </ligand>
    <ligandPart>
        <name>Fe</name>
        <dbReference type="ChEBI" id="CHEBI:18248"/>
    </ligandPart>
</feature>
<feature type="site" description="Transition state stabilizer" evidence="1">
    <location>
        <position position="99"/>
    </location>
</feature>
<feature type="cross-link" description="Tryptophyl-tyrosyl-methioninium (Trp-Tyr) (with M-249)" evidence="1">
    <location>
        <begin position="102"/>
        <end position="223"/>
    </location>
</feature>
<feature type="cross-link" description="Tryptophyl-tyrosyl-methioninium (Tyr-Met) (with W-102)" evidence="1">
    <location>
        <begin position="223"/>
        <end position="249"/>
    </location>
</feature>
<keyword id="KW-0349">Heme</keyword>
<keyword id="KW-0376">Hydrogen peroxide</keyword>
<keyword id="KW-0408">Iron</keyword>
<keyword id="KW-0479">Metal-binding</keyword>
<keyword id="KW-0560">Oxidoreductase</keyword>
<keyword id="KW-0575">Peroxidase</keyword>
<keyword id="KW-0732">Signal</keyword>
<organism>
    <name type="scientific">Yersinia pseudotuberculosis serotype O:3 (strain YPIII)</name>
    <dbReference type="NCBI Taxonomy" id="502800"/>
    <lineage>
        <taxon>Bacteria</taxon>
        <taxon>Pseudomonadati</taxon>
        <taxon>Pseudomonadota</taxon>
        <taxon>Gammaproteobacteria</taxon>
        <taxon>Enterobacterales</taxon>
        <taxon>Yersiniaceae</taxon>
        <taxon>Yersinia</taxon>
    </lineage>
</organism>
<evidence type="ECO:0000255" key="1">
    <source>
        <dbReference type="HAMAP-Rule" id="MF_01961"/>
    </source>
</evidence>
<reference key="1">
    <citation type="submission" date="2008-02" db="EMBL/GenBank/DDBJ databases">
        <title>Complete sequence of Yersinia pseudotuberculosis YPIII.</title>
        <authorList>
            <consortium name="US DOE Joint Genome Institute"/>
            <person name="Copeland A."/>
            <person name="Lucas S."/>
            <person name="Lapidus A."/>
            <person name="Glavina del Rio T."/>
            <person name="Dalin E."/>
            <person name="Tice H."/>
            <person name="Bruce D."/>
            <person name="Goodwin L."/>
            <person name="Pitluck S."/>
            <person name="Munk A.C."/>
            <person name="Brettin T."/>
            <person name="Detter J.C."/>
            <person name="Han C."/>
            <person name="Tapia R."/>
            <person name="Schmutz J."/>
            <person name="Larimer F."/>
            <person name="Land M."/>
            <person name="Hauser L."/>
            <person name="Challacombe J.F."/>
            <person name="Green L."/>
            <person name="Lindler L.E."/>
            <person name="Nikolich M.P."/>
            <person name="Richardson P."/>
        </authorList>
    </citation>
    <scope>NUCLEOTIDE SEQUENCE [LARGE SCALE GENOMIC DNA]</scope>
    <source>
        <strain>YPIII</strain>
    </source>
</reference>
<protein>
    <recommendedName>
        <fullName evidence="1">Catalase-peroxidase</fullName>
        <shortName evidence="1">CP</shortName>
        <ecNumber evidence="1">1.11.1.21</ecNumber>
    </recommendedName>
    <alternativeName>
        <fullName evidence="1">Peroxidase/catalase</fullName>
    </alternativeName>
</protein>
<comment type="function">
    <text evidence="1">Bifunctional enzyme with both catalase and broad-spectrum peroxidase activity.</text>
</comment>
<comment type="catalytic activity">
    <reaction evidence="1">
        <text>H2O2 + AH2 = A + 2 H2O</text>
        <dbReference type="Rhea" id="RHEA:30275"/>
        <dbReference type="ChEBI" id="CHEBI:13193"/>
        <dbReference type="ChEBI" id="CHEBI:15377"/>
        <dbReference type="ChEBI" id="CHEBI:16240"/>
        <dbReference type="ChEBI" id="CHEBI:17499"/>
        <dbReference type="EC" id="1.11.1.21"/>
    </reaction>
</comment>
<comment type="catalytic activity">
    <reaction evidence="1">
        <text>2 H2O2 = O2 + 2 H2O</text>
        <dbReference type="Rhea" id="RHEA:20309"/>
        <dbReference type="ChEBI" id="CHEBI:15377"/>
        <dbReference type="ChEBI" id="CHEBI:15379"/>
        <dbReference type="ChEBI" id="CHEBI:16240"/>
        <dbReference type="EC" id="1.11.1.21"/>
    </reaction>
</comment>
<comment type="cofactor">
    <cofactor evidence="1">
        <name>heme b</name>
        <dbReference type="ChEBI" id="CHEBI:60344"/>
    </cofactor>
    <text evidence="1">Binds 1 heme b (iron(II)-protoporphyrin IX) group per dimer.</text>
</comment>
<comment type="subunit">
    <text evidence="1">Homodimer or homotetramer.</text>
</comment>
<comment type="PTM">
    <text evidence="1">Formation of the three residue Trp-Tyr-Met cross-link is important for the catalase, but not the peroxidase activity of the enzyme.</text>
</comment>
<comment type="similarity">
    <text evidence="1">Belongs to the peroxidase family. Peroxidase/catalase subfamily.</text>
</comment>
<name>KATG_YERPY</name>
<accession>B1JJB5</accession>